<evidence type="ECO:0000250" key="1">
    <source>
        <dbReference type="UniProtKB" id="P32092"/>
    </source>
</evidence>
<evidence type="ECO:0000255" key="2">
    <source>
        <dbReference type="PROSITE-ProRule" id="PRU00794"/>
    </source>
</evidence>
<evidence type="ECO:0000305" key="3"/>
<feature type="chain" id="PRO_0000373098" description="mRNA-decapping protein g5R">
    <location>
        <begin position="1"/>
        <end position="246"/>
    </location>
</feature>
<feature type="domain" description="Nudix hydrolase" evidence="2">
    <location>
        <begin position="91"/>
        <end position="239"/>
    </location>
</feature>
<feature type="short sequence motif" description="Nudix box" evidence="2">
    <location>
        <begin position="128"/>
        <end position="149"/>
    </location>
</feature>
<feature type="active site" description="Nucleophile" evidence="1">
    <location>
        <position position="143"/>
    </location>
</feature>
<feature type="binding site" evidence="1">
    <location>
        <position position="134"/>
    </location>
    <ligand>
        <name>Mg(2+)</name>
        <dbReference type="ChEBI" id="CHEBI:18420"/>
    </ligand>
</feature>
<feature type="binding site" evidence="1">
    <location>
        <position position="147"/>
    </location>
    <ligand>
        <name>Mg(2+)</name>
        <dbReference type="ChEBI" id="CHEBI:18420"/>
    </ligand>
</feature>
<feature type="binding site" evidence="1">
    <location>
        <position position="169"/>
    </location>
    <ligand>
        <name>Mg(2+)</name>
        <dbReference type="ChEBI" id="CHEBI:18420"/>
    </ligand>
</feature>
<organism>
    <name type="scientific">African swine fever virus (isolate Pig/Kenya/KEN-50/1950)</name>
    <name type="common">ASFV</name>
    <dbReference type="NCBI Taxonomy" id="561445"/>
    <lineage>
        <taxon>Viruses</taxon>
        <taxon>Varidnaviria</taxon>
        <taxon>Bamfordvirae</taxon>
        <taxon>Nucleocytoviricota</taxon>
        <taxon>Pokkesviricetes</taxon>
        <taxon>Asfuvirales</taxon>
        <taxon>Asfarviridae</taxon>
        <taxon>Asfivirus</taxon>
        <taxon>African swine fever virus</taxon>
    </lineage>
</organism>
<comment type="function">
    <text evidence="1">Decapping enzyme required for the removal of the 5'-end m7GpppN cap tethered to viral and host mRNAs to allow their decay in cells. May therefore accelerate viral and cellular mRNA turnover to eliminate competing host mRNAs and allow stage-specific synthesis of viral proteins. Acceleration of the turnover of cellular transcripts may even promote the shutoff of host protein synthesis. In addition to the mRNA cap, g5R also efficiently hydrolyzes diphosphoinositol polyphosphates. Down-regulation of the level of PP-InsP5 (diphosphoinositol pentakisphosphate) may play a role in viral manipulation of the cellular secretory pathway, a step necessary for the formation of virions. Binds viral and cellular poly(A) mRNAs, thereby decreasing both types of mRNAs.</text>
</comment>
<comment type="catalytic activity">
    <reaction evidence="1">
        <text>diphospho-myo-inositol polyphosphate + H2O = myo-inositol polyphosphate + phosphate.</text>
        <dbReference type="EC" id="3.6.1.52"/>
    </reaction>
</comment>
<comment type="cofactor">
    <cofactor evidence="1">
        <name>Mg(2+)</name>
        <dbReference type="ChEBI" id="CHEBI:18420"/>
    </cofactor>
    <cofactor evidence="1">
        <name>Mn(2+)</name>
        <dbReference type="ChEBI" id="CHEBI:29035"/>
    </cofactor>
</comment>
<comment type="subunit">
    <text evidence="1">Interacts with host RPL23A.</text>
</comment>
<comment type="subcellular location">
    <subcellularLocation>
        <location evidence="1">Host rough endoplasmic reticulum</location>
    </subcellularLocation>
    <text evidence="1">Accumulates at the periphery of the viral factories.</text>
</comment>
<comment type="similarity">
    <text evidence="3">Belongs to the Nudix hydrolase family. DIPP subfamily.</text>
</comment>
<name>DIPP_ASFK5</name>
<organismHost>
    <name type="scientific">Ornithodoros</name>
    <name type="common">relapsing fever ticks</name>
    <dbReference type="NCBI Taxonomy" id="6937"/>
</organismHost>
<organismHost>
    <name type="scientific">Phacochoerus aethiopicus</name>
    <name type="common">Warthog</name>
    <dbReference type="NCBI Taxonomy" id="85517"/>
</organismHost>
<organismHost>
    <name type="scientific">Phacochoerus africanus</name>
    <name type="common">Warthog</name>
    <dbReference type="NCBI Taxonomy" id="41426"/>
</organismHost>
<organismHost>
    <name type="scientific">Potamochoerus larvatus</name>
    <name type="common">Bushpig</name>
    <dbReference type="NCBI Taxonomy" id="273792"/>
</organismHost>
<organismHost>
    <name type="scientific">Sus scrofa</name>
    <name type="common">Pig</name>
    <dbReference type="NCBI Taxonomy" id="9823"/>
</organismHost>
<sequence length="246" mass="29201">MQLKTSIGLITCRMNTQSNQIETILVQKRYSLAFSEFIHCHYSINSNHSHLIKMFNNMTINERLLIKTLDFDRMWYHIWIETPVYELYHKKYQKFKKNWLIPDNGKKLISLINQAKGSGTLLWEIPKGKPKENESDLACAIREFEEETGIAREDYQILPAFKKSMSYFEGKTEYKHIYFLAVLCKSLEEPNMNLSLQYETRIAEISKISWQNMEAVRFISKHQSLNLEPIIGPAFNFIKNYLRYKH</sequence>
<gene>
    <name type="ordered locus">Ken-114</name>
</gene>
<dbReference type="EC" id="3.1.3.-" evidence="1"/>
<dbReference type="EC" id="3.6.1.52" evidence="1"/>
<dbReference type="EMBL" id="AY261360">
    <property type="status" value="NOT_ANNOTATED_CDS"/>
    <property type="molecule type" value="Genomic_DNA"/>
</dbReference>
<dbReference type="SMR" id="P0C998"/>
<dbReference type="Proteomes" id="UP000000861">
    <property type="component" value="Segment"/>
</dbReference>
<dbReference type="GO" id="GO:0044168">
    <property type="term" value="C:host cell rough endoplasmic reticulum"/>
    <property type="evidence" value="ECO:0007669"/>
    <property type="project" value="UniProtKB-SubCell"/>
</dbReference>
<dbReference type="GO" id="GO:0004081">
    <property type="term" value="F:bis(5'-nucleosyl)-tetraphosphatase (asymmetrical) activity"/>
    <property type="evidence" value="ECO:0007669"/>
    <property type="project" value="TreeGrafter"/>
</dbReference>
<dbReference type="GO" id="GO:0008486">
    <property type="term" value="F:diphosphoinositol-polyphosphate diphosphatase activity"/>
    <property type="evidence" value="ECO:0007669"/>
    <property type="project" value="UniProtKB-EC"/>
</dbReference>
<dbReference type="GO" id="GO:0046872">
    <property type="term" value="F:metal ion binding"/>
    <property type="evidence" value="ECO:0007669"/>
    <property type="project" value="UniProtKB-KW"/>
</dbReference>
<dbReference type="GO" id="GO:0003723">
    <property type="term" value="F:RNA binding"/>
    <property type="evidence" value="ECO:0007669"/>
    <property type="project" value="UniProtKB-KW"/>
</dbReference>
<dbReference type="GO" id="GO:0006167">
    <property type="term" value="P:AMP biosynthetic process"/>
    <property type="evidence" value="ECO:0007669"/>
    <property type="project" value="TreeGrafter"/>
</dbReference>
<dbReference type="GO" id="GO:0006754">
    <property type="term" value="P:ATP biosynthetic process"/>
    <property type="evidence" value="ECO:0007669"/>
    <property type="project" value="TreeGrafter"/>
</dbReference>
<dbReference type="GO" id="GO:0039657">
    <property type="term" value="P:symbiont-mediated suppression of host gene expression"/>
    <property type="evidence" value="ECO:0007669"/>
    <property type="project" value="UniProtKB-KW"/>
</dbReference>
<dbReference type="Gene3D" id="3.90.79.10">
    <property type="entry name" value="Nucleoside Triphosphate Pyrophosphohydrolase"/>
    <property type="match status" value="1"/>
</dbReference>
<dbReference type="InterPro" id="IPR015797">
    <property type="entry name" value="NUDIX_hydrolase-like_dom_sf"/>
</dbReference>
<dbReference type="InterPro" id="IPR020084">
    <property type="entry name" value="NUDIX_hydrolase_CS"/>
</dbReference>
<dbReference type="InterPro" id="IPR000086">
    <property type="entry name" value="NUDIX_hydrolase_dom"/>
</dbReference>
<dbReference type="InterPro" id="IPR051325">
    <property type="entry name" value="Nudix_hydrolase_domain"/>
</dbReference>
<dbReference type="PANTHER" id="PTHR21340:SF0">
    <property type="entry name" value="BIS(5'-NUCLEOSYL)-TETRAPHOSPHATASE [ASYMMETRICAL]"/>
    <property type="match status" value="1"/>
</dbReference>
<dbReference type="PANTHER" id="PTHR21340">
    <property type="entry name" value="DIADENOSINE 5,5-P1,P4-TETRAPHOSPHATE PYROPHOSPHOHYDROLASE MUTT"/>
    <property type="match status" value="1"/>
</dbReference>
<dbReference type="Pfam" id="PF00293">
    <property type="entry name" value="NUDIX"/>
    <property type="match status" value="1"/>
</dbReference>
<dbReference type="SUPFAM" id="SSF55811">
    <property type="entry name" value="Nudix"/>
    <property type="match status" value="1"/>
</dbReference>
<dbReference type="PROSITE" id="PS51462">
    <property type="entry name" value="NUDIX"/>
    <property type="match status" value="1"/>
</dbReference>
<dbReference type="PROSITE" id="PS00893">
    <property type="entry name" value="NUDIX_BOX"/>
    <property type="match status" value="1"/>
</dbReference>
<accession>P0C998</accession>
<reference key="1">
    <citation type="submission" date="2003-03" db="EMBL/GenBank/DDBJ databases">
        <title>African swine fever virus genomes.</title>
        <authorList>
            <person name="Kutish G.F."/>
            <person name="Rock D.L."/>
        </authorList>
    </citation>
    <scope>NUCLEOTIDE SEQUENCE [LARGE SCALE GENOMIC DNA]</scope>
</reference>
<keyword id="KW-0244">Early protein</keyword>
<keyword id="KW-1262">Eukaryotic host gene expression shutoff by virus</keyword>
<keyword id="KW-1038">Host endoplasmic reticulum</keyword>
<keyword id="KW-1190">Host gene expression shutoff by virus</keyword>
<keyword id="KW-0945">Host-virus interaction</keyword>
<keyword id="KW-0378">Hydrolase</keyword>
<keyword id="KW-0426">Late protein</keyword>
<keyword id="KW-0460">Magnesium</keyword>
<keyword id="KW-0464">Manganese</keyword>
<keyword id="KW-0479">Metal-binding</keyword>
<keyword id="KW-0511">Multifunctional enzyme</keyword>
<keyword id="KW-0694">RNA-binding</keyword>
<protein>
    <recommendedName>
        <fullName>mRNA-decapping protein g5R</fullName>
        <shortName evidence="1">g5Rp</shortName>
        <ecNumber evidence="1">3.1.3.-</ecNumber>
    </recommendedName>
    <alternativeName>
        <fullName evidence="1">ASFV-DP</fullName>
    </alternativeName>
    <alternativeName>
        <fullName>Diphosphoinositol polyphosphate phosphohydrolase</fullName>
        <shortName>DIPP</shortName>
        <ecNumber evidence="1">3.6.1.52</ecNumber>
    </alternativeName>
</protein>
<proteinExistence type="inferred from homology"/>